<comment type="function">
    <text evidence="1">Catalyzes the reversible conversion of ribose-5-phosphate to ribulose 5-phosphate.</text>
</comment>
<comment type="catalytic activity">
    <reaction evidence="1">
        <text>aldehydo-D-ribose 5-phosphate = D-ribulose 5-phosphate</text>
        <dbReference type="Rhea" id="RHEA:14657"/>
        <dbReference type="ChEBI" id="CHEBI:58121"/>
        <dbReference type="ChEBI" id="CHEBI:58273"/>
        <dbReference type="EC" id="5.3.1.6"/>
    </reaction>
</comment>
<comment type="pathway">
    <text evidence="1">Carbohydrate degradation; pentose phosphate pathway; D-ribose 5-phosphate from D-ribulose 5-phosphate (non-oxidative stage): step 1/1.</text>
</comment>
<comment type="subunit">
    <text evidence="1">Homodimer.</text>
</comment>
<comment type="similarity">
    <text evidence="1">Belongs to the ribose 5-phosphate isomerase family.</text>
</comment>
<dbReference type="EC" id="5.3.1.6" evidence="1"/>
<dbReference type="EMBL" id="CP000524">
    <property type="protein sequence ID" value="ABM45346.1"/>
    <property type="molecule type" value="Genomic_DNA"/>
</dbReference>
<dbReference type="RefSeq" id="WP_005766779.1">
    <property type="nucleotide sequence ID" value="NC_008783.1"/>
</dbReference>
<dbReference type="SMR" id="A1USF7"/>
<dbReference type="STRING" id="360095.BARBAKC583_0602"/>
<dbReference type="GeneID" id="4684263"/>
<dbReference type="KEGG" id="bbk:BARBAKC583_0602"/>
<dbReference type="PATRIC" id="fig|360095.6.peg.588"/>
<dbReference type="eggNOG" id="COG0120">
    <property type="taxonomic scope" value="Bacteria"/>
</dbReference>
<dbReference type="HOGENOM" id="CLU_056590_1_0_5"/>
<dbReference type="OrthoDB" id="5870696at2"/>
<dbReference type="UniPathway" id="UPA00115">
    <property type="reaction ID" value="UER00412"/>
</dbReference>
<dbReference type="Proteomes" id="UP000000643">
    <property type="component" value="Chromosome"/>
</dbReference>
<dbReference type="GO" id="GO:0005829">
    <property type="term" value="C:cytosol"/>
    <property type="evidence" value="ECO:0007669"/>
    <property type="project" value="TreeGrafter"/>
</dbReference>
<dbReference type="GO" id="GO:0004751">
    <property type="term" value="F:ribose-5-phosphate isomerase activity"/>
    <property type="evidence" value="ECO:0007669"/>
    <property type="project" value="UniProtKB-UniRule"/>
</dbReference>
<dbReference type="GO" id="GO:0006014">
    <property type="term" value="P:D-ribose metabolic process"/>
    <property type="evidence" value="ECO:0007669"/>
    <property type="project" value="TreeGrafter"/>
</dbReference>
<dbReference type="GO" id="GO:0009052">
    <property type="term" value="P:pentose-phosphate shunt, non-oxidative branch"/>
    <property type="evidence" value="ECO:0007669"/>
    <property type="project" value="UniProtKB-UniRule"/>
</dbReference>
<dbReference type="CDD" id="cd01398">
    <property type="entry name" value="RPI_A"/>
    <property type="match status" value="1"/>
</dbReference>
<dbReference type="FunFam" id="3.40.50.1360:FF:000001">
    <property type="entry name" value="Ribose-5-phosphate isomerase A"/>
    <property type="match status" value="1"/>
</dbReference>
<dbReference type="Gene3D" id="3.30.70.260">
    <property type="match status" value="1"/>
</dbReference>
<dbReference type="Gene3D" id="3.40.50.1360">
    <property type="match status" value="1"/>
</dbReference>
<dbReference type="HAMAP" id="MF_00170">
    <property type="entry name" value="Rib_5P_isom_A"/>
    <property type="match status" value="1"/>
</dbReference>
<dbReference type="InterPro" id="IPR037171">
    <property type="entry name" value="NagB/RpiA_transferase-like"/>
</dbReference>
<dbReference type="InterPro" id="IPR020672">
    <property type="entry name" value="Ribose5P_isomerase_typA_subgr"/>
</dbReference>
<dbReference type="InterPro" id="IPR004788">
    <property type="entry name" value="Ribose5P_isomerase_type_A"/>
</dbReference>
<dbReference type="NCBIfam" id="NF001924">
    <property type="entry name" value="PRK00702.1"/>
    <property type="match status" value="1"/>
</dbReference>
<dbReference type="NCBIfam" id="TIGR00021">
    <property type="entry name" value="rpiA"/>
    <property type="match status" value="1"/>
</dbReference>
<dbReference type="PANTHER" id="PTHR11934">
    <property type="entry name" value="RIBOSE-5-PHOSPHATE ISOMERASE"/>
    <property type="match status" value="1"/>
</dbReference>
<dbReference type="PANTHER" id="PTHR11934:SF0">
    <property type="entry name" value="RIBOSE-5-PHOSPHATE ISOMERASE"/>
    <property type="match status" value="1"/>
</dbReference>
<dbReference type="Pfam" id="PF06026">
    <property type="entry name" value="Rib_5-P_isom_A"/>
    <property type="match status" value="1"/>
</dbReference>
<dbReference type="SMART" id="SM01134">
    <property type="entry name" value="DeoRC"/>
    <property type="match status" value="1"/>
</dbReference>
<dbReference type="SUPFAM" id="SSF75445">
    <property type="entry name" value="D-ribose-5-phosphate isomerase (RpiA), lid domain"/>
    <property type="match status" value="1"/>
</dbReference>
<dbReference type="SUPFAM" id="SSF100950">
    <property type="entry name" value="NagB/RpiA/CoA transferase-like"/>
    <property type="match status" value="1"/>
</dbReference>
<proteinExistence type="inferred from homology"/>
<organism>
    <name type="scientific">Bartonella bacilliformis (strain ATCC 35685 / KC583 / Herrer 020/F12,63)</name>
    <dbReference type="NCBI Taxonomy" id="360095"/>
    <lineage>
        <taxon>Bacteria</taxon>
        <taxon>Pseudomonadati</taxon>
        <taxon>Pseudomonadota</taxon>
        <taxon>Alphaproteobacteria</taxon>
        <taxon>Hyphomicrobiales</taxon>
        <taxon>Bartonellaceae</taxon>
        <taxon>Bartonella</taxon>
    </lineage>
</organism>
<feature type="chain" id="PRO_1000016902" description="Ribose-5-phosphate isomerase A">
    <location>
        <begin position="1"/>
        <end position="233"/>
    </location>
</feature>
<feature type="active site" description="Proton acceptor" evidence="1">
    <location>
        <position position="105"/>
    </location>
</feature>
<feature type="binding site" evidence="1">
    <location>
        <begin position="28"/>
        <end position="31"/>
    </location>
    <ligand>
        <name>substrate</name>
    </ligand>
</feature>
<feature type="binding site" evidence="1">
    <location>
        <begin position="83"/>
        <end position="86"/>
    </location>
    <ligand>
        <name>substrate</name>
    </ligand>
</feature>
<feature type="binding site" evidence="1">
    <location>
        <begin position="96"/>
        <end position="99"/>
    </location>
    <ligand>
        <name>substrate</name>
    </ligand>
</feature>
<feature type="binding site" evidence="1">
    <location>
        <position position="123"/>
    </location>
    <ligand>
        <name>substrate</name>
    </ligand>
</feature>
<sequence length="233" mass="24768">MNAQELKKVAAAKALEFVQDGMRLGIGSGSTANEFIRLLGERVANGLHVIGVATSHYSEQLCRQVGVPVTTLEQIPELDLDIDGADEIGPNMTLIKGGGGALLREKIVAAASHEMLIIADETKVVKTLGAFALPIAVNQFGLSVTRSAIEKMAKGLGLSGKVTLRMNGDNPFKTDDGHFIFDASWGHIVQPKLLSNALFEIPGVIEHGLFVGLASRSIIAMADGQIKILEKKC</sequence>
<protein>
    <recommendedName>
        <fullName evidence="1">Ribose-5-phosphate isomerase A</fullName>
        <ecNumber evidence="1">5.3.1.6</ecNumber>
    </recommendedName>
    <alternativeName>
        <fullName evidence="1">Phosphoriboisomerase A</fullName>
        <shortName evidence="1">PRI</shortName>
    </alternativeName>
</protein>
<reference key="1">
    <citation type="submission" date="2006-12" db="EMBL/GenBank/DDBJ databases">
        <authorList>
            <person name="Hendrix L."/>
            <person name="Mohamoud Y."/>
            <person name="Radune D."/>
            <person name="Shvartsbeyn A."/>
            <person name="Daugherty S."/>
            <person name="Dodson R."/>
            <person name="Durkin A.S."/>
            <person name="Harkins D."/>
            <person name="Huot H."/>
            <person name="Kothari S.P."/>
            <person name="Madupu R."/>
            <person name="Li J."/>
            <person name="Nelson W.C."/>
            <person name="Shrivastava S."/>
            <person name="Giglio M.G."/>
            <person name="Haft D."/>
            <person name="Selengut J."/>
            <person name="Fraser-Ligget C."/>
            <person name="Seshadri R."/>
        </authorList>
    </citation>
    <scope>NUCLEOTIDE SEQUENCE [LARGE SCALE GENOMIC DNA]</scope>
    <source>
        <strain>ATCC 35685 / KC583 / Herrer 020/F12,63</strain>
    </source>
</reference>
<evidence type="ECO:0000255" key="1">
    <source>
        <dbReference type="HAMAP-Rule" id="MF_00170"/>
    </source>
</evidence>
<keyword id="KW-0413">Isomerase</keyword>
<accession>A1USF7</accession>
<name>RPIA_BARBK</name>
<gene>
    <name evidence="1" type="primary">rpiA</name>
    <name type="ordered locus">BARBAKC583_0602</name>
</gene>